<comment type="function">
    <text evidence="1">Required, but not essential, for D1 (psbA) precursor processing and thus correct photosystem II assembly (PSII).</text>
</comment>
<comment type="subunit">
    <text evidence="1">Interacts with the C-terminus of both the precursor and mature form of D1.</text>
</comment>
<comment type="subcellular location">
    <subcellularLocation>
        <location evidence="1">Plastid</location>
        <location evidence="1">Chloroplast thylakoid lumen</location>
    </subcellularLocation>
    <text>Associated with PSII on the lumenal side of the thylakoid membrane.</text>
</comment>
<comment type="disruption phenotype">
    <text evidence="1">A high chlorophyll fluorescence mutant. Impaired PSII function, maximum photochemical efficiency of PSII was decreased, about 25% PSII in thylakoids; severely reduced growth, decreased chlorophyll content. Inefficient processing of the D1 precursor to the mature form.</text>
</comment>
<comment type="similarity">
    <text evidence="2">Belongs to the Psb27 family.</text>
</comment>
<name>PB27B_ARATH</name>
<dbReference type="EMBL" id="AC005106">
    <property type="protein sequence ID" value="AAF79740.1"/>
    <property type="molecule type" value="Genomic_DNA"/>
</dbReference>
<dbReference type="EMBL" id="CP002684">
    <property type="protein sequence ID" value="AEE27833.1"/>
    <property type="molecule type" value="Genomic_DNA"/>
</dbReference>
<dbReference type="EMBL" id="AF370242">
    <property type="protein sequence ID" value="AAK44057.1"/>
    <property type="molecule type" value="mRNA"/>
</dbReference>
<dbReference type="EMBL" id="AY142580">
    <property type="protein sequence ID" value="AAN13149.1"/>
    <property type="molecule type" value="mRNA"/>
</dbReference>
<dbReference type="EMBL" id="AK118288">
    <property type="protein sequence ID" value="BAC42906.1"/>
    <property type="molecule type" value="mRNA"/>
</dbReference>
<dbReference type="PIR" id="G86188">
    <property type="entry name" value="G86188"/>
</dbReference>
<dbReference type="RefSeq" id="NP_563737.1">
    <property type="nucleotide sequence ID" value="NM_100418.3"/>
</dbReference>
<dbReference type="SMR" id="Q9ZVZ9"/>
<dbReference type="BioGRID" id="22282">
    <property type="interactions" value="1"/>
</dbReference>
<dbReference type="FunCoup" id="Q9ZVZ9">
    <property type="interactions" value="1041"/>
</dbReference>
<dbReference type="STRING" id="3702.Q9ZVZ9"/>
<dbReference type="MetOSite" id="Q9ZVZ9"/>
<dbReference type="PaxDb" id="3702-AT1G05385.1"/>
<dbReference type="ProteomicsDB" id="236439"/>
<dbReference type="EnsemblPlants" id="AT1G05385.1">
    <property type="protein sequence ID" value="AT1G05385.1"/>
    <property type="gene ID" value="AT1G05385"/>
</dbReference>
<dbReference type="GeneID" id="837040"/>
<dbReference type="Gramene" id="AT1G05385.1">
    <property type="protein sequence ID" value="AT1G05385.1"/>
    <property type="gene ID" value="AT1G05385"/>
</dbReference>
<dbReference type="KEGG" id="ath:AT1G05385"/>
<dbReference type="Araport" id="AT1G05385"/>
<dbReference type="TAIR" id="AT1G05385">
    <property type="gene designation" value="LPA19"/>
</dbReference>
<dbReference type="eggNOG" id="ENOG502RXV8">
    <property type="taxonomic scope" value="Eukaryota"/>
</dbReference>
<dbReference type="HOGENOM" id="CLU_084967_1_0_1"/>
<dbReference type="InParanoid" id="Q9ZVZ9"/>
<dbReference type="OrthoDB" id="543314at2759"/>
<dbReference type="PhylomeDB" id="Q9ZVZ9"/>
<dbReference type="PRO" id="PR:Q9ZVZ9"/>
<dbReference type="Proteomes" id="UP000006548">
    <property type="component" value="Chromosome 1"/>
</dbReference>
<dbReference type="ExpressionAtlas" id="Q9ZVZ9">
    <property type="expression patterns" value="baseline and differential"/>
</dbReference>
<dbReference type="GO" id="GO:0009507">
    <property type="term" value="C:chloroplast"/>
    <property type="evidence" value="ECO:0007005"/>
    <property type="project" value="TAIR"/>
</dbReference>
<dbReference type="GO" id="GO:0009543">
    <property type="term" value="C:chloroplast thylakoid lumen"/>
    <property type="evidence" value="ECO:0000314"/>
    <property type="project" value="TAIR"/>
</dbReference>
<dbReference type="GO" id="GO:0005829">
    <property type="term" value="C:cytosol"/>
    <property type="evidence" value="ECO:0007005"/>
    <property type="project" value="TAIR"/>
</dbReference>
<dbReference type="GO" id="GO:0009523">
    <property type="term" value="C:photosystem II"/>
    <property type="evidence" value="ECO:0007669"/>
    <property type="project" value="InterPro"/>
</dbReference>
<dbReference type="GO" id="GO:0010207">
    <property type="term" value="P:photosystem II assembly"/>
    <property type="evidence" value="ECO:0000315"/>
    <property type="project" value="TAIR"/>
</dbReference>
<dbReference type="GO" id="GO:0010206">
    <property type="term" value="P:photosystem II repair"/>
    <property type="evidence" value="ECO:0007669"/>
    <property type="project" value="InterPro"/>
</dbReference>
<dbReference type="FunFam" id="1.20.58.810:FF:000002">
    <property type="entry name" value="Photosystem II D1 processing protein PSB27-H2, chloroplastic"/>
    <property type="match status" value="1"/>
</dbReference>
<dbReference type="Gene3D" id="1.20.58.810">
    <property type="entry name" value="Photosystem II Pbs27"/>
    <property type="match status" value="1"/>
</dbReference>
<dbReference type="HAMAP" id="MF_01481">
    <property type="entry name" value="PSII_Psb27"/>
    <property type="match status" value="1"/>
</dbReference>
<dbReference type="InterPro" id="IPR025585">
    <property type="entry name" value="PSII_Psb27"/>
</dbReference>
<dbReference type="InterPro" id="IPR038450">
    <property type="entry name" value="PSII_Psb27_sf"/>
</dbReference>
<dbReference type="PANTHER" id="PTHR34041:SF3">
    <property type="entry name" value="PHOTOSYSTEM II D1 PRECURSOR PROCESSING PROTEIN PSB27-H2, CHLOROPLASTIC"/>
    <property type="match status" value="1"/>
</dbReference>
<dbReference type="PANTHER" id="PTHR34041">
    <property type="entry name" value="PHOTOSYSTEM II REPAIR PROTEIN PSB27-H1, CHLOROPLASTIC"/>
    <property type="match status" value="1"/>
</dbReference>
<dbReference type="Pfam" id="PF13326">
    <property type="entry name" value="PSII_Pbs27"/>
    <property type="match status" value="1"/>
</dbReference>
<protein>
    <recommendedName>
        <fullName>Photosystem II D1 precursor processing protein PSB27-H2, chloroplastic</fullName>
        <shortName>Psb27-H2</shortName>
    </recommendedName>
    <alternativeName>
        <fullName>LOW PSII accumulation 19 protein</fullName>
        <shortName>LPA19</shortName>
    </alternativeName>
    <alternativeName>
        <fullName>Thylakoid lumenal protein PSB27-H2</fullName>
    </alternativeName>
</protein>
<reference key="1">
    <citation type="journal article" date="2000" name="Nature">
        <title>Sequence and analysis of chromosome 1 of the plant Arabidopsis thaliana.</title>
        <authorList>
            <person name="Theologis A."/>
            <person name="Ecker J.R."/>
            <person name="Palm C.J."/>
            <person name="Federspiel N.A."/>
            <person name="Kaul S."/>
            <person name="White O."/>
            <person name="Alonso J."/>
            <person name="Altafi H."/>
            <person name="Araujo R."/>
            <person name="Bowman C.L."/>
            <person name="Brooks S.Y."/>
            <person name="Buehler E."/>
            <person name="Chan A."/>
            <person name="Chao Q."/>
            <person name="Chen H."/>
            <person name="Cheuk R.F."/>
            <person name="Chin C.W."/>
            <person name="Chung M.K."/>
            <person name="Conn L."/>
            <person name="Conway A.B."/>
            <person name="Conway A.R."/>
            <person name="Creasy T.H."/>
            <person name="Dewar K."/>
            <person name="Dunn P."/>
            <person name="Etgu P."/>
            <person name="Feldblyum T.V."/>
            <person name="Feng J.-D."/>
            <person name="Fong B."/>
            <person name="Fujii C.Y."/>
            <person name="Gill J.E."/>
            <person name="Goldsmith A.D."/>
            <person name="Haas B."/>
            <person name="Hansen N.F."/>
            <person name="Hughes B."/>
            <person name="Huizar L."/>
            <person name="Hunter J.L."/>
            <person name="Jenkins J."/>
            <person name="Johnson-Hopson C."/>
            <person name="Khan S."/>
            <person name="Khaykin E."/>
            <person name="Kim C.J."/>
            <person name="Koo H.L."/>
            <person name="Kremenetskaia I."/>
            <person name="Kurtz D.B."/>
            <person name="Kwan A."/>
            <person name="Lam B."/>
            <person name="Langin-Hooper S."/>
            <person name="Lee A."/>
            <person name="Lee J.M."/>
            <person name="Lenz C.A."/>
            <person name="Li J.H."/>
            <person name="Li Y.-P."/>
            <person name="Lin X."/>
            <person name="Liu S.X."/>
            <person name="Liu Z.A."/>
            <person name="Luros J.S."/>
            <person name="Maiti R."/>
            <person name="Marziali A."/>
            <person name="Militscher J."/>
            <person name="Miranda M."/>
            <person name="Nguyen M."/>
            <person name="Nierman W.C."/>
            <person name="Osborne B.I."/>
            <person name="Pai G."/>
            <person name="Peterson J."/>
            <person name="Pham P.K."/>
            <person name="Rizzo M."/>
            <person name="Rooney T."/>
            <person name="Rowley D."/>
            <person name="Sakano H."/>
            <person name="Salzberg S.L."/>
            <person name="Schwartz J.R."/>
            <person name="Shinn P."/>
            <person name="Southwick A.M."/>
            <person name="Sun H."/>
            <person name="Tallon L.J."/>
            <person name="Tambunga G."/>
            <person name="Toriumi M.J."/>
            <person name="Town C.D."/>
            <person name="Utterback T."/>
            <person name="Van Aken S."/>
            <person name="Vaysberg M."/>
            <person name="Vysotskaia V.S."/>
            <person name="Walker M."/>
            <person name="Wu D."/>
            <person name="Yu G."/>
            <person name="Fraser C.M."/>
            <person name="Venter J.C."/>
            <person name="Davis R.W."/>
        </authorList>
    </citation>
    <scope>NUCLEOTIDE SEQUENCE [LARGE SCALE GENOMIC DNA]</scope>
    <source>
        <strain>cv. Columbia</strain>
    </source>
</reference>
<reference key="2">
    <citation type="journal article" date="2017" name="Plant J.">
        <title>Araport11: a complete reannotation of the Arabidopsis thaliana reference genome.</title>
        <authorList>
            <person name="Cheng C.Y."/>
            <person name="Krishnakumar V."/>
            <person name="Chan A.P."/>
            <person name="Thibaud-Nissen F."/>
            <person name="Schobel S."/>
            <person name="Town C.D."/>
        </authorList>
    </citation>
    <scope>GENOME REANNOTATION</scope>
    <source>
        <strain>cv. Columbia</strain>
    </source>
</reference>
<reference key="3">
    <citation type="journal article" date="2003" name="Science">
        <title>Empirical analysis of transcriptional activity in the Arabidopsis genome.</title>
        <authorList>
            <person name="Yamada K."/>
            <person name="Lim J."/>
            <person name="Dale J.M."/>
            <person name="Chen H."/>
            <person name="Shinn P."/>
            <person name="Palm C.J."/>
            <person name="Southwick A.M."/>
            <person name="Wu H.C."/>
            <person name="Kim C.J."/>
            <person name="Nguyen M."/>
            <person name="Pham P.K."/>
            <person name="Cheuk R.F."/>
            <person name="Karlin-Newmann G."/>
            <person name="Liu S.X."/>
            <person name="Lam B."/>
            <person name="Sakano H."/>
            <person name="Wu T."/>
            <person name="Yu G."/>
            <person name="Miranda M."/>
            <person name="Quach H.L."/>
            <person name="Tripp M."/>
            <person name="Chang C.H."/>
            <person name="Lee J.M."/>
            <person name="Toriumi M.J."/>
            <person name="Chan M.M."/>
            <person name="Tang C.C."/>
            <person name="Onodera C.S."/>
            <person name="Deng J.M."/>
            <person name="Akiyama K."/>
            <person name="Ansari Y."/>
            <person name="Arakawa T."/>
            <person name="Banh J."/>
            <person name="Banno F."/>
            <person name="Bowser L."/>
            <person name="Brooks S.Y."/>
            <person name="Carninci P."/>
            <person name="Chao Q."/>
            <person name="Choy N."/>
            <person name="Enju A."/>
            <person name="Goldsmith A.D."/>
            <person name="Gurjal M."/>
            <person name="Hansen N.F."/>
            <person name="Hayashizaki Y."/>
            <person name="Johnson-Hopson C."/>
            <person name="Hsuan V.W."/>
            <person name="Iida K."/>
            <person name="Karnes M."/>
            <person name="Khan S."/>
            <person name="Koesema E."/>
            <person name="Ishida J."/>
            <person name="Jiang P.X."/>
            <person name="Jones T."/>
            <person name="Kawai J."/>
            <person name="Kamiya A."/>
            <person name="Meyers C."/>
            <person name="Nakajima M."/>
            <person name="Narusaka M."/>
            <person name="Seki M."/>
            <person name="Sakurai T."/>
            <person name="Satou M."/>
            <person name="Tamse R."/>
            <person name="Vaysberg M."/>
            <person name="Wallender E.K."/>
            <person name="Wong C."/>
            <person name="Yamamura Y."/>
            <person name="Yuan S."/>
            <person name="Shinozaki K."/>
            <person name="Davis R.W."/>
            <person name="Theologis A."/>
            <person name="Ecker J.R."/>
        </authorList>
    </citation>
    <scope>NUCLEOTIDE SEQUENCE [LARGE SCALE MRNA]</scope>
    <source>
        <strain>cv. Columbia</strain>
    </source>
</reference>
<reference key="4">
    <citation type="journal article" date="2002" name="Science">
        <title>Functional annotation of a full-length Arabidopsis cDNA collection.</title>
        <authorList>
            <person name="Seki M."/>
            <person name="Narusaka M."/>
            <person name="Kamiya A."/>
            <person name="Ishida J."/>
            <person name="Satou M."/>
            <person name="Sakurai T."/>
            <person name="Nakajima M."/>
            <person name="Enju A."/>
            <person name="Akiyama K."/>
            <person name="Oono Y."/>
            <person name="Muramatsu M."/>
            <person name="Hayashizaki Y."/>
            <person name="Kawai J."/>
            <person name="Carninci P."/>
            <person name="Itoh M."/>
            <person name="Ishii Y."/>
            <person name="Arakawa T."/>
            <person name="Shibata K."/>
            <person name="Shinagawa A."/>
            <person name="Shinozaki K."/>
        </authorList>
    </citation>
    <scope>NUCLEOTIDE SEQUENCE [LARGE SCALE MRNA]</scope>
    <source>
        <strain>cv. Columbia</strain>
    </source>
</reference>
<reference key="5">
    <citation type="journal article" date="2010" name="J. Biol. Chem.">
        <title>LPA19, a Psb27 homolog in Arabidopsis thaliana, facilitates D1 protein precursor processing during PSII biogenesis.</title>
        <authorList>
            <person name="Wei L."/>
            <person name="Guo J."/>
            <person name="Ouyang M."/>
            <person name="Sun X."/>
            <person name="Ma J."/>
            <person name="Chi W."/>
            <person name="Lu C."/>
            <person name="Zhang L."/>
        </authorList>
    </citation>
    <scope>FUNCTION</scope>
    <scope>SUBCELLULAR LOCATION</scope>
    <scope>INTERACTION WITH D1 (PSBA)</scope>
    <scope>DISRUPTION PHENOTYPE</scope>
    <source>
        <strain>cv. Columbia</strain>
    </source>
</reference>
<accession>Q9ZVZ9</accession>
<accession>Q8GXE0</accession>
<feature type="transit peptide" description="Chloroplast" evidence="2">
    <location>
        <begin position="1"/>
        <end status="unknown"/>
    </location>
</feature>
<feature type="transit peptide" description="Thylakoid" evidence="2">
    <location>
        <begin status="unknown"/>
        <end position="67"/>
    </location>
</feature>
<feature type="chain" id="PRO_0000422926" description="Photosystem II D1 precursor processing protein PSB27-H2, chloroplastic">
    <location>
        <begin position="68"/>
        <end position="199"/>
    </location>
</feature>
<feature type="sequence conflict" description="In Ref. 4; BAC42906." evidence="2" ref="4">
    <original>K</original>
    <variation>R</variation>
    <location>
        <position position="122"/>
    </location>
</feature>
<organism>
    <name type="scientific">Arabidopsis thaliana</name>
    <name type="common">Mouse-ear cress</name>
    <dbReference type="NCBI Taxonomy" id="3702"/>
    <lineage>
        <taxon>Eukaryota</taxon>
        <taxon>Viridiplantae</taxon>
        <taxon>Streptophyta</taxon>
        <taxon>Embryophyta</taxon>
        <taxon>Tracheophyta</taxon>
        <taxon>Spermatophyta</taxon>
        <taxon>Magnoliopsida</taxon>
        <taxon>eudicotyledons</taxon>
        <taxon>Gunneridae</taxon>
        <taxon>Pentapetalae</taxon>
        <taxon>rosids</taxon>
        <taxon>malvids</taxon>
        <taxon>Brassicales</taxon>
        <taxon>Brassicaceae</taxon>
        <taxon>Camelineae</taxon>
        <taxon>Arabidopsis</taxon>
    </lineage>
</organism>
<proteinExistence type="evidence at protein level"/>
<keyword id="KW-0150">Chloroplast</keyword>
<keyword id="KW-0934">Plastid</keyword>
<keyword id="KW-1185">Reference proteome</keyword>
<keyword id="KW-0793">Thylakoid</keyword>
<keyword id="KW-0809">Transit peptide</keyword>
<gene>
    <name type="primary">PSB27-2</name>
    <name type="synonym">LPA19</name>
    <name type="ordered locus">At1g05385</name>
    <name type="ORF">T25N20.4</name>
</gene>
<evidence type="ECO:0000269" key="1">
    <source>
    </source>
</evidence>
<evidence type="ECO:0000305" key="2"/>
<sequence length="199" mass="22267">MGFLVAVMNFSPTLVHHHMKSKPQCQNEKLRQGQTSSLFDRRGFLKCVVGASSFMATIEFSGLQAQASEEKLDEGEGVVGAFKTLFDPNERTKSGKELPKAYLKSAREVVKTMRESLKENPKDNAKFRRSADAAKESIRDYLSNWRGQKTVAGEESYVELENVIRALAKFYSKAGPSAPLPDEVKTEILDDLNKAEEFL</sequence>